<accession>Q1MTR0</accession>
<feature type="chain" id="PRO_0000330073" description="Mitochondrial inner membrane protease atp23">
    <location>
        <begin position="1"/>
        <end position="185"/>
    </location>
</feature>
<feature type="active site" evidence="2">
    <location>
        <position position="87"/>
    </location>
</feature>
<feature type="binding site" evidence="1">
    <location>
        <position position="86"/>
    </location>
    <ligand>
        <name>a divalent metal cation</name>
        <dbReference type="ChEBI" id="CHEBI:60240"/>
        <note>catalytic</note>
    </ligand>
</feature>
<feature type="binding site" evidence="1">
    <location>
        <position position="90"/>
    </location>
    <ligand>
        <name>a divalent metal cation</name>
        <dbReference type="ChEBI" id="CHEBI:60240"/>
        <note>catalytic</note>
    </ligand>
</feature>
<gene>
    <name type="primary">atp23</name>
    <name type="ORF">SPCC320.12</name>
    <name type="ORF">SPCC330.17c</name>
</gene>
<keyword id="KW-0378">Hydrolase</keyword>
<keyword id="KW-0472">Membrane</keyword>
<keyword id="KW-0479">Metal-binding</keyword>
<keyword id="KW-0482">Metalloprotease</keyword>
<keyword id="KW-0496">Mitochondrion</keyword>
<keyword id="KW-0999">Mitochondrion inner membrane</keyword>
<keyword id="KW-0645">Protease</keyword>
<keyword id="KW-1185">Reference proteome</keyword>
<comment type="function">
    <text evidence="1">Has a dual role in the assembly of mitochondrial ATPase. Acts as a protease that removes N-terminal residues of mitochondrial ATPase CF(0) subunit 6 at the intermembrane space side. Also involved in the correct assembly of the membrane-embedded ATPase CF(0) particle, probably mediating association of subunit 6 with the subunit 9 ring (By similarity).</text>
</comment>
<comment type="subcellular location">
    <subcellularLocation>
        <location>Mitochondrion inner membrane</location>
        <topology>Peripheral membrane protein</topology>
        <orientation>Intermembrane side</orientation>
    </subcellularLocation>
    <text evidence="1">Associates loosely with the inner membrane.</text>
</comment>
<comment type="similarity">
    <text evidence="3">Belongs to the peptidase M76 family.</text>
</comment>
<sequence length="185" mass="21512">MSEDPQSWSKERKNCERVKRALMSQSPVIIFLKTALDRLNCNIEAKDISCQPCDAQSTGGYIPGKGIVLCENRLYTKKMAENTIAHEMIHMFDDHRFEVDWNNLRHQACSEIRASSMSGECRWTKELRFGNIKTFRKHHQECVKRRATISVQGNPNCKSKEQAEAIVEEVFNSCFNDFRPFEKIY</sequence>
<name>ATP23_SCHPO</name>
<organism>
    <name type="scientific">Schizosaccharomyces pombe (strain 972 / ATCC 24843)</name>
    <name type="common">Fission yeast</name>
    <dbReference type="NCBI Taxonomy" id="284812"/>
    <lineage>
        <taxon>Eukaryota</taxon>
        <taxon>Fungi</taxon>
        <taxon>Dikarya</taxon>
        <taxon>Ascomycota</taxon>
        <taxon>Taphrinomycotina</taxon>
        <taxon>Schizosaccharomycetes</taxon>
        <taxon>Schizosaccharomycetales</taxon>
        <taxon>Schizosaccharomycetaceae</taxon>
        <taxon>Schizosaccharomyces</taxon>
    </lineage>
</organism>
<protein>
    <recommendedName>
        <fullName>Mitochondrial inner membrane protease atp23</fullName>
        <ecNumber>3.4.24.-</ecNumber>
    </recommendedName>
</protein>
<evidence type="ECO:0000250" key="1"/>
<evidence type="ECO:0000255" key="2">
    <source>
        <dbReference type="PROSITE-ProRule" id="PRU10095"/>
    </source>
</evidence>
<evidence type="ECO:0000305" key="3"/>
<reference key="1">
    <citation type="journal article" date="2002" name="Nature">
        <title>The genome sequence of Schizosaccharomyces pombe.</title>
        <authorList>
            <person name="Wood V."/>
            <person name="Gwilliam R."/>
            <person name="Rajandream M.A."/>
            <person name="Lyne M.H."/>
            <person name="Lyne R."/>
            <person name="Stewart A."/>
            <person name="Sgouros J.G."/>
            <person name="Peat N."/>
            <person name="Hayles J."/>
            <person name="Baker S.G."/>
            <person name="Basham D."/>
            <person name="Bowman S."/>
            <person name="Brooks K."/>
            <person name="Brown D."/>
            <person name="Brown S."/>
            <person name="Chillingworth T."/>
            <person name="Churcher C.M."/>
            <person name="Collins M."/>
            <person name="Connor R."/>
            <person name="Cronin A."/>
            <person name="Davis P."/>
            <person name="Feltwell T."/>
            <person name="Fraser A."/>
            <person name="Gentles S."/>
            <person name="Goble A."/>
            <person name="Hamlin N."/>
            <person name="Harris D.E."/>
            <person name="Hidalgo J."/>
            <person name="Hodgson G."/>
            <person name="Holroyd S."/>
            <person name="Hornsby T."/>
            <person name="Howarth S."/>
            <person name="Huckle E.J."/>
            <person name="Hunt S."/>
            <person name="Jagels K."/>
            <person name="James K.D."/>
            <person name="Jones L."/>
            <person name="Jones M."/>
            <person name="Leather S."/>
            <person name="McDonald S."/>
            <person name="McLean J."/>
            <person name="Mooney P."/>
            <person name="Moule S."/>
            <person name="Mungall K.L."/>
            <person name="Murphy L.D."/>
            <person name="Niblett D."/>
            <person name="Odell C."/>
            <person name="Oliver K."/>
            <person name="O'Neil S."/>
            <person name="Pearson D."/>
            <person name="Quail M.A."/>
            <person name="Rabbinowitsch E."/>
            <person name="Rutherford K.M."/>
            <person name="Rutter S."/>
            <person name="Saunders D."/>
            <person name="Seeger K."/>
            <person name="Sharp S."/>
            <person name="Skelton J."/>
            <person name="Simmonds M.N."/>
            <person name="Squares R."/>
            <person name="Squares S."/>
            <person name="Stevens K."/>
            <person name="Taylor K."/>
            <person name="Taylor R.G."/>
            <person name="Tivey A."/>
            <person name="Walsh S.V."/>
            <person name="Warren T."/>
            <person name="Whitehead S."/>
            <person name="Woodward J.R."/>
            <person name="Volckaert G."/>
            <person name="Aert R."/>
            <person name="Robben J."/>
            <person name="Grymonprez B."/>
            <person name="Weltjens I."/>
            <person name="Vanstreels E."/>
            <person name="Rieger M."/>
            <person name="Schaefer M."/>
            <person name="Mueller-Auer S."/>
            <person name="Gabel C."/>
            <person name="Fuchs M."/>
            <person name="Duesterhoeft A."/>
            <person name="Fritzc C."/>
            <person name="Holzer E."/>
            <person name="Moestl D."/>
            <person name="Hilbert H."/>
            <person name="Borzym K."/>
            <person name="Langer I."/>
            <person name="Beck A."/>
            <person name="Lehrach H."/>
            <person name="Reinhardt R."/>
            <person name="Pohl T.M."/>
            <person name="Eger P."/>
            <person name="Zimmermann W."/>
            <person name="Wedler H."/>
            <person name="Wambutt R."/>
            <person name="Purnelle B."/>
            <person name="Goffeau A."/>
            <person name="Cadieu E."/>
            <person name="Dreano S."/>
            <person name="Gloux S."/>
            <person name="Lelaure V."/>
            <person name="Mottier S."/>
            <person name="Galibert F."/>
            <person name="Aves S.J."/>
            <person name="Xiang Z."/>
            <person name="Hunt C."/>
            <person name="Moore K."/>
            <person name="Hurst S.M."/>
            <person name="Lucas M."/>
            <person name="Rochet M."/>
            <person name="Gaillardin C."/>
            <person name="Tallada V.A."/>
            <person name="Garzon A."/>
            <person name="Thode G."/>
            <person name="Daga R.R."/>
            <person name="Cruzado L."/>
            <person name="Jimenez J."/>
            <person name="Sanchez M."/>
            <person name="del Rey F."/>
            <person name="Benito J."/>
            <person name="Dominguez A."/>
            <person name="Revuelta J.L."/>
            <person name="Moreno S."/>
            <person name="Armstrong J."/>
            <person name="Forsburg S.L."/>
            <person name="Cerutti L."/>
            <person name="Lowe T."/>
            <person name="McCombie W.R."/>
            <person name="Paulsen I."/>
            <person name="Potashkin J."/>
            <person name="Shpakovski G.V."/>
            <person name="Ussery D."/>
            <person name="Barrell B.G."/>
            <person name="Nurse P."/>
        </authorList>
    </citation>
    <scope>NUCLEOTIDE SEQUENCE [LARGE SCALE GENOMIC DNA]</scope>
    <source>
        <strain>972 / ATCC 24843</strain>
    </source>
</reference>
<proteinExistence type="inferred from homology"/>
<dbReference type="EC" id="3.4.24.-"/>
<dbReference type="EMBL" id="CU329672">
    <property type="protein sequence ID" value="CAA20922.1"/>
    <property type="molecule type" value="Genomic_DNA"/>
</dbReference>
<dbReference type="PIR" id="T41299">
    <property type="entry name" value="T41299"/>
</dbReference>
<dbReference type="RefSeq" id="NP_587717.1">
    <property type="nucleotide sequence ID" value="NM_001022712.2"/>
</dbReference>
<dbReference type="BioGRID" id="275282">
    <property type="interactions" value="1"/>
</dbReference>
<dbReference type="FunCoup" id="Q1MTR0">
    <property type="interactions" value="421"/>
</dbReference>
<dbReference type="STRING" id="284812.Q1MTR0"/>
<dbReference type="MEROPS" id="M76.001"/>
<dbReference type="MEROPS" id="M76.A02"/>
<dbReference type="SwissPalm" id="Q1MTR0"/>
<dbReference type="PaxDb" id="4896-SPCC320.12.1"/>
<dbReference type="EnsemblFungi" id="SPCC320.12.1">
    <property type="protein sequence ID" value="SPCC320.12.1:pep"/>
    <property type="gene ID" value="SPCC320.12"/>
</dbReference>
<dbReference type="GeneID" id="2538697"/>
<dbReference type="KEGG" id="spo:2538697"/>
<dbReference type="PomBase" id="SPCC320.12">
    <property type="gene designation" value="atp23"/>
</dbReference>
<dbReference type="VEuPathDB" id="FungiDB:SPCC320.12"/>
<dbReference type="eggNOG" id="KOG3314">
    <property type="taxonomic scope" value="Eukaryota"/>
</dbReference>
<dbReference type="HOGENOM" id="CLU_079125_0_0_1"/>
<dbReference type="InParanoid" id="Q1MTR0"/>
<dbReference type="OMA" id="EAHQNCV"/>
<dbReference type="PhylomeDB" id="Q1MTR0"/>
<dbReference type="PRO" id="PR:Q1MTR0"/>
<dbReference type="Proteomes" id="UP000002485">
    <property type="component" value="Chromosome III"/>
</dbReference>
<dbReference type="GO" id="GO:0005743">
    <property type="term" value="C:mitochondrial inner membrane"/>
    <property type="evidence" value="ECO:0000266"/>
    <property type="project" value="PomBase"/>
</dbReference>
<dbReference type="GO" id="GO:0046872">
    <property type="term" value="F:metal ion binding"/>
    <property type="evidence" value="ECO:0007669"/>
    <property type="project" value="UniProtKB-KW"/>
</dbReference>
<dbReference type="GO" id="GO:0004222">
    <property type="term" value="F:metalloendopeptidase activity"/>
    <property type="evidence" value="ECO:0000255"/>
    <property type="project" value="PomBase"/>
</dbReference>
<dbReference type="GO" id="GO:0034982">
    <property type="term" value="P:mitochondrial protein processing"/>
    <property type="evidence" value="ECO:0000318"/>
    <property type="project" value="GO_Central"/>
</dbReference>
<dbReference type="GO" id="GO:0033615">
    <property type="term" value="P:mitochondrial proton-transporting ATP synthase complex assembly"/>
    <property type="evidence" value="ECO:0000318"/>
    <property type="project" value="GO_Central"/>
</dbReference>
<dbReference type="InterPro" id="IPR019165">
    <property type="entry name" value="Peptidase_M76_ATP23"/>
</dbReference>
<dbReference type="PANTHER" id="PTHR21711">
    <property type="entry name" value="MITOCHONDRIAL INNER MEMBRANE PROTEASE"/>
    <property type="match status" value="1"/>
</dbReference>
<dbReference type="PANTHER" id="PTHR21711:SF0">
    <property type="entry name" value="MITOCHONDRIAL INNER MEMBRANE PROTEASE ATP23 HOMOLOG"/>
    <property type="match status" value="1"/>
</dbReference>
<dbReference type="Pfam" id="PF09768">
    <property type="entry name" value="Peptidase_M76"/>
    <property type="match status" value="1"/>
</dbReference>
<dbReference type="PROSITE" id="PS00142">
    <property type="entry name" value="ZINC_PROTEASE"/>
    <property type="match status" value="1"/>
</dbReference>